<feature type="chain" id="PRO_0000421967" description="Phosphatidylinositol-3-phosphatase SAC1">
    <location>
        <begin position="1"/>
        <end position="912"/>
    </location>
</feature>
<feature type="domain" description="SAC" evidence="3">
    <location>
        <begin position="173"/>
        <end position="575"/>
    </location>
</feature>
<feature type="region of interest" description="Disordered" evidence="4">
    <location>
        <begin position="1"/>
        <end position="29"/>
    </location>
</feature>
<feature type="region of interest" description="Required for subcellular localization">
    <location>
        <begin position="715"/>
        <end position="912"/>
    </location>
</feature>
<feature type="region of interest" description="Disordered" evidence="4">
    <location>
        <begin position="740"/>
        <end position="766"/>
    </location>
</feature>
<feature type="short sequence motif" description="Phosphatase catalytic core">
    <location>
        <begin position="511"/>
        <end position="522"/>
    </location>
</feature>
<comment type="function">
    <text evidence="2 6">Phosphoinositide phosphatase which catalyzes the hydrolysis of phosphatidylinositol-3,5-bisphosphate (PtdIns(3,5)P2) (PubMed:15805481). Can also catalyze the hydrolysis of phosphatidylinositol 3-phosphate (PtdIns(3)P) and phosphatidylinositol 4-phosphate (PtdIns(4)P) (By similarity). Required for normal cell morphogenesis, cell wall synthesis, and actin organization (PubMed:15805481).</text>
</comment>
<comment type="catalytic activity">
    <reaction evidence="2">
        <text>a 1,2-diacyl-sn-glycero-3-phospho-(1D-myo-inositol-3-phosphate) + H2O = a 1,2-diacyl-sn-glycero-3-phospho-(1D-myo-inositol) + phosphate</text>
        <dbReference type="Rhea" id="RHEA:12316"/>
        <dbReference type="ChEBI" id="CHEBI:15377"/>
        <dbReference type="ChEBI" id="CHEBI:43474"/>
        <dbReference type="ChEBI" id="CHEBI:57880"/>
        <dbReference type="ChEBI" id="CHEBI:58088"/>
        <dbReference type="EC" id="3.1.3.64"/>
    </reaction>
    <physiologicalReaction direction="left-to-right" evidence="2">
        <dbReference type="Rhea" id="RHEA:12317"/>
    </physiologicalReaction>
</comment>
<comment type="catalytic activity">
    <reaction evidence="6">
        <text>a 1,2-diacyl-sn-glycero-3-phospho-(1D-myo-inositol-3,5-bisphosphate) + H2O = a 1,2-diacyl-sn-glycero-3-phospho-(1D-myo-inositol-3-phosphate) + phosphate</text>
        <dbReference type="Rhea" id="RHEA:32955"/>
        <dbReference type="ChEBI" id="CHEBI:15377"/>
        <dbReference type="ChEBI" id="CHEBI:43474"/>
        <dbReference type="ChEBI" id="CHEBI:57923"/>
        <dbReference type="ChEBI" id="CHEBI:58088"/>
    </reaction>
</comment>
<comment type="catalytic activity">
    <reaction evidence="2">
        <text>a 1,2-diacyl-sn-glycero-3-phospho-(1D-myo-inositol 4-phosphate) + H2O = a 1,2-diacyl-sn-glycero-3-phospho-(1D-myo-inositol) + phosphate</text>
        <dbReference type="Rhea" id="RHEA:55652"/>
        <dbReference type="ChEBI" id="CHEBI:15377"/>
        <dbReference type="ChEBI" id="CHEBI:43474"/>
        <dbReference type="ChEBI" id="CHEBI:57880"/>
        <dbReference type="ChEBI" id="CHEBI:58178"/>
    </reaction>
    <physiologicalReaction direction="left-to-right" evidence="2">
        <dbReference type="Rhea" id="RHEA:55653"/>
    </physiologicalReaction>
</comment>
<comment type="cofactor">
    <cofactor evidence="1">
        <name>Mg(2+)</name>
        <dbReference type="ChEBI" id="CHEBI:18420"/>
    </cofactor>
</comment>
<comment type="subunit">
    <text evidence="1">Component of the PI(3,5)P2 regulatory complex at least composed of ATG18, SAC/FIG4, FAB1 and VAC14.</text>
</comment>
<comment type="subcellular location">
    <subcellularLocation>
        <location evidence="1">Vacuole membrane</location>
        <topology evidence="1">Peripheral membrane protein</topology>
    </subcellularLocation>
    <subcellularLocation>
        <location evidence="6">Golgi apparatus</location>
    </subcellularLocation>
</comment>
<comment type="tissue specificity">
    <text evidence="5 6">Ubiquitous with higher expression level in both young elongating and nonelongating stems. Detected in vascular tissues.</text>
</comment>
<comment type="domain">
    <text evidence="5 6">The phosphatase catalytic core motif (or RXNCXDCLDRTN motif) from the SAC domain is found in metal-independent protein phosphatases and inositol polyphosphate phosphatases.</text>
</comment>
<comment type="sequence caution" evidence="8">
    <conflict type="erroneous gene model prediction">
        <sequence resource="EMBL-CDS" id="AAC25523"/>
    </conflict>
</comment>
<comment type="sequence caution" evidence="8">
    <conflict type="erroneous gene model prediction">
        <sequence resource="EMBL-CDS" id="AAF18517"/>
    </conflict>
</comment>
<proteinExistence type="evidence at protein level"/>
<organism>
    <name type="scientific">Arabidopsis thaliana</name>
    <name type="common">Mouse-ear cress</name>
    <dbReference type="NCBI Taxonomy" id="3702"/>
    <lineage>
        <taxon>Eukaryota</taxon>
        <taxon>Viridiplantae</taxon>
        <taxon>Streptophyta</taxon>
        <taxon>Embryophyta</taxon>
        <taxon>Tracheophyta</taxon>
        <taxon>Spermatophyta</taxon>
        <taxon>Magnoliopsida</taxon>
        <taxon>eudicotyledons</taxon>
        <taxon>Gunneridae</taxon>
        <taxon>Pentapetalae</taxon>
        <taxon>rosids</taxon>
        <taxon>malvids</taxon>
        <taxon>Brassicales</taxon>
        <taxon>Brassicaceae</taxon>
        <taxon>Camelineae</taxon>
        <taxon>Arabidopsis</taxon>
    </lineage>
</organism>
<protein>
    <recommendedName>
        <fullName>Phosphatidylinositol-3-phosphatase SAC1</fullName>
        <shortName>AtSAC1</shortName>
        <ecNumber evidence="2">3.1.3.64</ecNumber>
    </recommendedName>
    <alternativeName>
        <fullName>Factor-induced gene 4-like protein</fullName>
        <shortName>AtFIG4</shortName>
    </alternativeName>
    <alternativeName>
        <fullName evidence="7">Phosphatidylinositol 3,5-bisphosphate 5-phosphatase SAC1</fullName>
    </alternativeName>
    <alternativeName>
        <fullName evidence="2">Phosphatidylinositol-4-phosphate phosphatase</fullName>
    </alternativeName>
    <alternativeName>
        <fullName>Protein FRAGILE FIBER 7</fullName>
    </alternativeName>
    <alternativeName>
        <fullName>Protein SUPPRESSOR OF ACTIN 1</fullName>
    </alternativeName>
    <alternativeName>
        <fullName>SAC domain protein 1</fullName>
    </alternativeName>
</protein>
<gene>
    <name type="primary">SAC1</name>
    <name type="synonym">FIG4</name>
    <name type="synonym">FRA7</name>
    <name type="ordered locus">At1g22620</name>
    <name type="ORF">F12K8.3</name>
    <name type="ORF">T22J18.20</name>
</gene>
<evidence type="ECO:0000250" key="1"/>
<evidence type="ECO:0000250" key="2">
    <source>
        <dbReference type="UniProtKB" id="P32368"/>
    </source>
</evidence>
<evidence type="ECO:0000255" key="3">
    <source>
        <dbReference type="PROSITE-ProRule" id="PRU00183"/>
    </source>
</evidence>
<evidence type="ECO:0000256" key="4">
    <source>
        <dbReference type="SAM" id="MobiDB-lite"/>
    </source>
</evidence>
<evidence type="ECO:0000269" key="5">
    <source>
    </source>
</evidence>
<evidence type="ECO:0000269" key="6">
    <source>
    </source>
</evidence>
<evidence type="ECO:0000303" key="7">
    <source>
    </source>
</evidence>
<evidence type="ECO:0000305" key="8"/>
<accession>Q7XZU3</accession>
<accession>O80557</accession>
<accession>Q9SKA4</accession>
<keyword id="KW-0333">Golgi apparatus</keyword>
<keyword id="KW-0378">Hydrolase</keyword>
<keyword id="KW-0472">Membrane</keyword>
<keyword id="KW-1185">Reference proteome</keyword>
<keyword id="KW-0926">Vacuole</keyword>
<reference key="1">
    <citation type="journal article" date="2003" name="Plant Physiol.">
        <title>The SAC domain-containing protein gene family in Arabidopsis.</title>
        <authorList>
            <person name="Zhong R."/>
            <person name="Ye Z.-H."/>
        </authorList>
    </citation>
    <scope>NUCLEOTIDE SEQUENCE [MRNA]</scope>
    <scope>GENE FAMILY</scope>
    <scope>DOMAIN</scope>
    <scope>TISSUE SPECIFICITY</scope>
</reference>
<reference key="2">
    <citation type="submission" date="2000-05" db="EMBL/GenBank/DDBJ databases">
        <title>Cloning of AtFIG4 an Arabidopsis gene similar to the yeast FIG4 gene.</title>
        <authorList>
            <person name="Despres B."/>
            <person name="Delseny M."/>
            <person name="Devic M."/>
        </authorList>
    </citation>
    <scope>NUCLEOTIDE SEQUENCE [MRNA]</scope>
    <source>
        <strain>cv. Columbia</strain>
    </source>
</reference>
<reference key="3">
    <citation type="journal article" date="2000" name="Nature">
        <title>Sequence and analysis of chromosome 1 of the plant Arabidopsis thaliana.</title>
        <authorList>
            <person name="Theologis A."/>
            <person name="Ecker J.R."/>
            <person name="Palm C.J."/>
            <person name="Federspiel N.A."/>
            <person name="Kaul S."/>
            <person name="White O."/>
            <person name="Alonso J."/>
            <person name="Altafi H."/>
            <person name="Araujo R."/>
            <person name="Bowman C.L."/>
            <person name="Brooks S.Y."/>
            <person name="Buehler E."/>
            <person name="Chan A."/>
            <person name="Chao Q."/>
            <person name="Chen H."/>
            <person name="Cheuk R.F."/>
            <person name="Chin C.W."/>
            <person name="Chung M.K."/>
            <person name="Conn L."/>
            <person name="Conway A.B."/>
            <person name="Conway A.R."/>
            <person name="Creasy T.H."/>
            <person name="Dewar K."/>
            <person name="Dunn P."/>
            <person name="Etgu P."/>
            <person name="Feldblyum T.V."/>
            <person name="Feng J.-D."/>
            <person name="Fong B."/>
            <person name="Fujii C.Y."/>
            <person name="Gill J.E."/>
            <person name="Goldsmith A.D."/>
            <person name="Haas B."/>
            <person name="Hansen N.F."/>
            <person name="Hughes B."/>
            <person name="Huizar L."/>
            <person name="Hunter J.L."/>
            <person name="Jenkins J."/>
            <person name="Johnson-Hopson C."/>
            <person name="Khan S."/>
            <person name="Khaykin E."/>
            <person name="Kim C.J."/>
            <person name="Koo H.L."/>
            <person name="Kremenetskaia I."/>
            <person name="Kurtz D.B."/>
            <person name="Kwan A."/>
            <person name="Lam B."/>
            <person name="Langin-Hooper S."/>
            <person name="Lee A."/>
            <person name="Lee J.M."/>
            <person name="Lenz C.A."/>
            <person name="Li J.H."/>
            <person name="Li Y.-P."/>
            <person name="Lin X."/>
            <person name="Liu S.X."/>
            <person name="Liu Z.A."/>
            <person name="Luros J.S."/>
            <person name="Maiti R."/>
            <person name="Marziali A."/>
            <person name="Militscher J."/>
            <person name="Miranda M."/>
            <person name="Nguyen M."/>
            <person name="Nierman W.C."/>
            <person name="Osborne B.I."/>
            <person name="Pai G."/>
            <person name="Peterson J."/>
            <person name="Pham P.K."/>
            <person name="Rizzo M."/>
            <person name="Rooney T."/>
            <person name="Rowley D."/>
            <person name="Sakano H."/>
            <person name="Salzberg S.L."/>
            <person name="Schwartz J.R."/>
            <person name="Shinn P."/>
            <person name="Southwick A.M."/>
            <person name="Sun H."/>
            <person name="Tallon L.J."/>
            <person name="Tambunga G."/>
            <person name="Toriumi M.J."/>
            <person name="Town C.D."/>
            <person name="Utterback T."/>
            <person name="Van Aken S."/>
            <person name="Vaysberg M."/>
            <person name="Vysotskaia V.S."/>
            <person name="Walker M."/>
            <person name="Wu D."/>
            <person name="Yu G."/>
            <person name="Fraser C.M."/>
            <person name="Venter J.C."/>
            <person name="Davis R.W."/>
        </authorList>
    </citation>
    <scope>NUCLEOTIDE SEQUENCE [LARGE SCALE GENOMIC DNA]</scope>
    <source>
        <strain>cv. Columbia</strain>
    </source>
</reference>
<reference key="4">
    <citation type="journal article" date="2017" name="Plant J.">
        <title>Araport11: a complete reannotation of the Arabidopsis thaliana reference genome.</title>
        <authorList>
            <person name="Cheng C.Y."/>
            <person name="Krishnakumar V."/>
            <person name="Chan A.P."/>
            <person name="Thibaud-Nissen F."/>
            <person name="Schobel S."/>
            <person name="Town C.D."/>
        </authorList>
    </citation>
    <scope>GENOME REANNOTATION</scope>
    <source>
        <strain>cv. Columbia</strain>
    </source>
</reference>
<reference key="5">
    <citation type="journal article" date="2005" name="Plant Cell">
        <title>Mutation of SAC1, an Arabidopsis SAC domain phosphoinositide phosphatase, causes alterations in cell morphogenesis, cell wall synthesis, and actin organization.</title>
        <authorList>
            <person name="Zhong R."/>
            <person name="Burk D.H."/>
            <person name="Nairn C.J."/>
            <person name="Wood-Jones A."/>
            <person name="Morrison W.H. III"/>
            <person name="Ye Z.H."/>
        </authorList>
    </citation>
    <scope>FUNCTION</scope>
    <scope>TISSUE SPECIFICITY</scope>
    <scope>CATALYTIC ACTIVITY</scope>
    <scope>SUBCELLULAR LOCATION</scope>
</reference>
<sequence length="912" mass="102812">MAKSENSTTSTFSSFANKIQPSNDAESDPDSYALEKFKLYETRARFYLVGSDRNKRFFRVLKIDRSEPSELNISEDPVVYSPQEIKSLLQRIAEGNRATGGLAFVAKVYGIAGCAKFMESYYLVLVTKRRQIGCICGHAIYAIDESQMISVPHATIQSDVANSKTELRYKKLLSSVDLTKDFFYSYTYPIMQSLQKNVLSSGEEGMPYDNIFVWNSYLTQPIRSRCNNTIWTLALVHGHFKQIRLSIYGRDFSVTLVSRRSRHFAGTRYLKRGVNDRGRVANDVETEQLVLDDEAGSCKGKMSSVVQMRGSIPLFWSQEASRFSPKPDIFLQRYDPTYESTKMHFEDLVNRYGNPIIVLNLIKTVEKRPREMVLRREFANAVGYLNSIFREENHLKFIHWDFHKFAKSKSANVLAVLGAVASEALDLTGLYFSGKPKIVKKKASQLSHANTAREPSLRDLRAYSAELSRGESANDILSALANREKEMKLTQQKKDEGTNSSAPRYQSGVLRTNCIDCLDRTNVAQYAYGLAALGRQLHAMGLSDTPKIDPDSSIAAALMDMYQSMGDALAQQYGGSAAHNTVFPERQGKWKATTQSREFLKSIKRYYSNTYTDGEKQDAINLFLGYFQPQEGKPALWELDSDYYLHVSGIGDDIFPDIGVQSIAKPMSGIGVNLAPVPAFRDDFSRKKLTSFDKLIEQTCSSIKNVRLCSETDQRPGGNTGSTGVAPDAAEIQLKSPNWLFGSRKPEESSSATKSGADDSEKGVTSTERVNDFCNLDWLSKSDRHQGDIFQRYLSITSTNEANGWYGGTLLGDQDENSEIYRHYAQFCQCPAMEPFENDHEFEQNFAEVLRMNTIDVMDIEEEETEMESDFNEYTQIGSDLGIIPMQCKHFASDPCWLARWLVGDDKVPKVI</sequence>
<name>SAC1_ARATH</name>
<dbReference type="EC" id="3.1.3.64" evidence="2"/>
<dbReference type="EMBL" id="AY227244">
    <property type="protein sequence ID" value="AAP49834.1"/>
    <property type="molecule type" value="mRNA"/>
</dbReference>
<dbReference type="EMBL" id="AF266460">
    <property type="protein sequence ID" value="AAQ13339.1"/>
    <property type="molecule type" value="mRNA"/>
</dbReference>
<dbReference type="EMBL" id="AC003979">
    <property type="protein sequence ID" value="AAC25523.1"/>
    <property type="status" value="ALT_SEQ"/>
    <property type="molecule type" value="Genomic_DNA"/>
</dbReference>
<dbReference type="EMBL" id="AC006551">
    <property type="protein sequence ID" value="AAF18517.1"/>
    <property type="status" value="ALT_SEQ"/>
    <property type="molecule type" value="Genomic_DNA"/>
</dbReference>
<dbReference type="EMBL" id="CP002684">
    <property type="protein sequence ID" value="AEE30261.1"/>
    <property type="molecule type" value="Genomic_DNA"/>
</dbReference>
<dbReference type="PIR" id="T00781">
    <property type="entry name" value="T00781"/>
</dbReference>
<dbReference type="RefSeq" id="NP_173676.2">
    <property type="nucleotide sequence ID" value="NM_102109.4"/>
</dbReference>
<dbReference type="SMR" id="Q7XZU3"/>
<dbReference type="FunCoup" id="Q7XZU3">
    <property type="interactions" value="4550"/>
</dbReference>
<dbReference type="STRING" id="3702.Q7XZU3"/>
<dbReference type="iPTMnet" id="Q7XZU3"/>
<dbReference type="PaxDb" id="3702-AT1G22620.1"/>
<dbReference type="ProMEX" id="Q7XZU3"/>
<dbReference type="ProteomicsDB" id="226683"/>
<dbReference type="EnsemblPlants" id="AT1G22620.1">
    <property type="protein sequence ID" value="AT1G22620.1"/>
    <property type="gene ID" value="AT1G22620"/>
</dbReference>
<dbReference type="GeneID" id="838868"/>
<dbReference type="Gramene" id="AT1G22620.1">
    <property type="protein sequence ID" value="AT1G22620.1"/>
    <property type="gene ID" value="AT1G22620"/>
</dbReference>
<dbReference type="KEGG" id="ath:AT1G22620"/>
<dbReference type="Araport" id="AT1G22620"/>
<dbReference type="TAIR" id="AT1G22620">
    <property type="gene designation" value="SAC1"/>
</dbReference>
<dbReference type="eggNOG" id="KOG1888">
    <property type="taxonomic scope" value="Eukaryota"/>
</dbReference>
<dbReference type="HOGENOM" id="CLU_003016_4_0_1"/>
<dbReference type="InParanoid" id="Q7XZU3"/>
<dbReference type="OMA" id="KRKCCAH"/>
<dbReference type="OrthoDB" id="405996at2759"/>
<dbReference type="PhylomeDB" id="Q7XZU3"/>
<dbReference type="BioCyc" id="ARA:AT1G22620-MONOMER"/>
<dbReference type="PRO" id="PR:Q7XZU3"/>
<dbReference type="Proteomes" id="UP000006548">
    <property type="component" value="Chromosome 1"/>
</dbReference>
<dbReference type="ExpressionAtlas" id="Q7XZU3">
    <property type="expression patterns" value="baseline and differential"/>
</dbReference>
<dbReference type="GO" id="GO:0005794">
    <property type="term" value="C:Golgi apparatus"/>
    <property type="evidence" value="ECO:0000314"/>
    <property type="project" value="TAIR"/>
</dbReference>
<dbReference type="GO" id="GO:0005774">
    <property type="term" value="C:vacuolar membrane"/>
    <property type="evidence" value="ECO:0007669"/>
    <property type="project" value="UniProtKB-SubCell"/>
</dbReference>
<dbReference type="GO" id="GO:0043813">
    <property type="term" value="F:phosphatidylinositol-3,5-bisphosphate 5-phosphatase activity"/>
    <property type="evidence" value="ECO:0000314"/>
    <property type="project" value="UniProtKB"/>
</dbReference>
<dbReference type="GO" id="GO:0004438">
    <property type="term" value="F:phosphatidylinositol-3-phosphate phosphatase activity"/>
    <property type="evidence" value="ECO:0007669"/>
    <property type="project" value="UniProtKB-EC"/>
</dbReference>
<dbReference type="GO" id="GO:0043812">
    <property type="term" value="F:phosphatidylinositol-4-phosphate phosphatase activity"/>
    <property type="evidence" value="ECO:0007669"/>
    <property type="project" value="RHEA"/>
</dbReference>
<dbReference type="GO" id="GO:0007010">
    <property type="term" value="P:cytoskeleton organization"/>
    <property type="evidence" value="ECO:0000315"/>
    <property type="project" value="TAIR"/>
</dbReference>
<dbReference type="GO" id="GO:0046856">
    <property type="term" value="P:phosphatidylinositol dephosphorylation"/>
    <property type="evidence" value="ECO:0007669"/>
    <property type="project" value="InterPro"/>
</dbReference>
<dbReference type="GO" id="GO:0036092">
    <property type="term" value="P:phosphatidylinositol-3-phosphate biosynthetic process"/>
    <property type="evidence" value="ECO:0000314"/>
    <property type="project" value="UniProtKB"/>
</dbReference>
<dbReference type="GO" id="GO:0009832">
    <property type="term" value="P:plant-type cell wall biogenesis"/>
    <property type="evidence" value="ECO:0000315"/>
    <property type="project" value="TAIR"/>
</dbReference>
<dbReference type="GO" id="GO:0009826">
    <property type="term" value="P:unidimensional cell growth"/>
    <property type="evidence" value="ECO:0000315"/>
    <property type="project" value="TAIR"/>
</dbReference>
<dbReference type="InterPro" id="IPR043573">
    <property type="entry name" value="Fig4-like"/>
</dbReference>
<dbReference type="InterPro" id="IPR002013">
    <property type="entry name" value="SAC_dom"/>
</dbReference>
<dbReference type="PANTHER" id="PTHR45738">
    <property type="entry name" value="POLYPHOSPHOINOSITIDE PHOSPHATASE"/>
    <property type="match status" value="1"/>
</dbReference>
<dbReference type="PANTHER" id="PTHR45738:SF5">
    <property type="entry name" value="POLYPHOSPHOINOSITIDE PHOSPHATASE"/>
    <property type="match status" value="1"/>
</dbReference>
<dbReference type="Pfam" id="PF02383">
    <property type="entry name" value="Syja_N"/>
    <property type="match status" value="1"/>
</dbReference>
<dbReference type="PROSITE" id="PS50275">
    <property type="entry name" value="SAC"/>
    <property type="match status" value="1"/>
</dbReference>